<keyword id="KW-0963">Cytoplasm</keyword>
<keyword id="KW-1185">Reference proteome</keyword>
<dbReference type="EMBL" id="CR382128">
    <property type="protein sequence ID" value="CAG83065.1"/>
    <property type="molecule type" value="Genomic_DNA"/>
</dbReference>
<dbReference type="RefSeq" id="XP_500814.1">
    <property type="nucleotide sequence ID" value="XM_500814.1"/>
</dbReference>
<dbReference type="FunCoup" id="Q6CEU8">
    <property type="interactions" value="40"/>
</dbReference>
<dbReference type="STRING" id="284591.Q6CEU8"/>
<dbReference type="EnsemblFungi" id="CAG83065">
    <property type="protein sequence ID" value="CAG83065"/>
    <property type="gene ID" value="YALI0_B12782g"/>
</dbReference>
<dbReference type="KEGG" id="yli:2906722"/>
<dbReference type="VEuPathDB" id="FungiDB:YALI0_B12782g"/>
<dbReference type="HOGENOM" id="CLU_009068_2_0_1"/>
<dbReference type="InParanoid" id="Q6CEU8"/>
<dbReference type="OMA" id="ISEPANC"/>
<dbReference type="OrthoDB" id="120759at4891"/>
<dbReference type="Proteomes" id="UP000001300">
    <property type="component" value="Chromosome B"/>
</dbReference>
<dbReference type="GO" id="GO:0005737">
    <property type="term" value="C:cytoplasm"/>
    <property type="evidence" value="ECO:0007669"/>
    <property type="project" value="UniProtKB-SubCell"/>
</dbReference>
<dbReference type="CDD" id="cd24139">
    <property type="entry name" value="SIP5-like"/>
    <property type="match status" value="1"/>
</dbReference>
<dbReference type="InterPro" id="IPR039301">
    <property type="entry name" value="Sip5/DA2"/>
</dbReference>
<dbReference type="PANTHER" id="PTHR31315">
    <property type="entry name" value="PROTEIN SIP5"/>
    <property type="match status" value="1"/>
</dbReference>
<dbReference type="PANTHER" id="PTHR31315:SF1">
    <property type="entry name" value="PROTEIN SIP5"/>
    <property type="match status" value="1"/>
</dbReference>
<gene>
    <name type="primary">SIP5</name>
    <name type="ordered locus">YALI0B12782g</name>
</gene>
<accession>Q6CEU8</accession>
<reference key="1">
    <citation type="journal article" date="2004" name="Nature">
        <title>Genome evolution in yeasts.</title>
        <authorList>
            <person name="Dujon B."/>
            <person name="Sherman D."/>
            <person name="Fischer G."/>
            <person name="Durrens P."/>
            <person name="Casaregola S."/>
            <person name="Lafontaine I."/>
            <person name="de Montigny J."/>
            <person name="Marck C."/>
            <person name="Neuveglise C."/>
            <person name="Talla E."/>
            <person name="Goffard N."/>
            <person name="Frangeul L."/>
            <person name="Aigle M."/>
            <person name="Anthouard V."/>
            <person name="Babour A."/>
            <person name="Barbe V."/>
            <person name="Barnay S."/>
            <person name="Blanchin S."/>
            <person name="Beckerich J.-M."/>
            <person name="Beyne E."/>
            <person name="Bleykasten C."/>
            <person name="Boisrame A."/>
            <person name="Boyer J."/>
            <person name="Cattolico L."/>
            <person name="Confanioleri F."/>
            <person name="de Daruvar A."/>
            <person name="Despons L."/>
            <person name="Fabre E."/>
            <person name="Fairhead C."/>
            <person name="Ferry-Dumazet H."/>
            <person name="Groppi A."/>
            <person name="Hantraye F."/>
            <person name="Hennequin C."/>
            <person name="Jauniaux N."/>
            <person name="Joyet P."/>
            <person name="Kachouri R."/>
            <person name="Kerrest A."/>
            <person name="Koszul R."/>
            <person name="Lemaire M."/>
            <person name="Lesur I."/>
            <person name="Ma L."/>
            <person name="Muller H."/>
            <person name="Nicaud J.-M."/>
            <person name="Nikolski M."/>
            <person name="Oztas S."/>
            <person name="Ozier-Kalogeropoulos O."/>
            <person name="Pellenz S."/>
            <person name="Potier S."/>
            <person name="Richard G.-F."/>
            <person name="Straub M.-L."/>
            <person name="Suleau A."/>
            <person name="Swennen D."/>
            <person name="Tekaia F."/>
            <person name="Wesolowski-Louvel M."/>
            <person name="Westhof E."/>
            <person name="Wirth B."/>
            <person name="Zeniou-Meyer M."/>
            <person name="Zivanovic Y."/>
            <person name="Bolotin-Fukuhara M."/>
            <person name="Thierry A."/>
            <person name="Bouchier C."/>
            <person name="Caudron B."/>
            <person name="Scarpelli C."/>
            <person name="Gaillardin C."/>
            <person name="Weissenbach J."/>
            <person name="Wincker P."/>
            <person name="Souciet J.-L."/>
        </authorList>
    </citation>
    <scope>NUCLEOTIDE SEQUENCE [LARGE SCALE GENOMIC DNA]</scope>
    <source>
        <strain>CLIB 122 / E 150</strain>
    </source>
</reference>
<evidence type="ECO:0000250" key="1"/>
<evidence type="ECO:0000256" key="2">
    <source>
        <dbReference type="SAM" id="MobiDB-lite"/>
    </source>
</evidence>
<evidence type="ECO:0000305" key="3"/>
<proteinExistence type="inferred from homology"/>
<organism>
    <name type="scientific">Yarrowia lipolytica (strain CLIB 122 / E 150)</name>
    <name type="common">Yeast</name>
    <name type="synonym">Candida lipolytica</name>
    <dbReference type="NCBI Taxonomy" id="284591"/>
    <lineage>
        <taxon>Eukaryota</taxon>
        <taxon>Fungi</taxon>
        <taxon>Dikarya</taxon>
        <taxon>Ascomycota</taxon>
        <taxon>Saccharomycotina</taxon>
        <taxon>Dipodascomycetes</taxon>
        <taxon>Dipodascales</taxon>
        <taxon>Dipodascales incertae sedis</taxon>
        <taxon>Yarrowia</taxon>
    </lineage>
</organism>
<feature type="chain" id="PRO_0000333445" description="Protein SIP5">
    <location>
        <begin position="1"/>
        <end position="497"/>
    </location>
</feature>
<feature type="region of interest" description="Disordered" evidence="2">
    <location>
        <begin position="1"/>
        <end position="52"/>
    </location>
</feature>
<feature type="region of interest" description="Disordered" evidence="2">
    <location>
        <begin position="112"/>
        <end position="172"/>
    </location>
</feature>
<feature type="region of interest" description="Disordered" evidence="2">
    <location>
        <begin position="185"/>
        <end position="240"/>
    </location>
</feature>
<feature type="region of interest" description="Disordered" evidence="2">
    <location>
        <begin position="348"/>
        <end position="371"/>
    </location>
</feature>
<feature type="region of interest" description="Disordered" evidence="2">
    <location>
        <begin position="438"/>
        <end position="497"/>
    </location>
</feature>
<feature type="compositionally biased region" description="Basic and acidic residues" evidence="2">
    <location>
        <begin position="17"/>
        <end position="27"/>
    </location>
</feature>
<feature type="compositionally biased region" description="Basic and acidic residues" evidence="2">
    <location>
        <begin position="34"/>
        <end position="44"/>
    </location>
</feature>
<feature type="compositionally biased region" description="Low complexity" evidence="2">
    <location>
        <begin position="112"/>
        <end position="135"/>
    </location>
</feature>
<feature type="compositionally biased region" description="Polar residues" evidence="2">
    <location>
        <begin position="136"/>
        <end position="146"/>
    </location>
</feature>
<feature type="compositionally biased region" description="Polar residues" evidence="2">
    <location>
        <begin position="185"/>
        <end position="194"/>
    </location>
</feature>
<feature type="compositionally biased region" description="Basic and acidic residues" evidence="2">
    <location>
        <begin position="486"/>
        <end position="497"/>
    </location>
</feature>
<comment type="function">
    <text evidence="1">May negatively regulate the SNF1 kinase.</text>
</comment>
<comment type="subcellular location">
    <subcellularLocation>
        <location evidence="1">Cytoplasm</location>
    </subcellularLocation>
</comment>
<comment type="similarity">
    <text evidence="3">Belongs to the SIP5 family.</text>
</comment>
<sequence>MGNVPGKEQQVRNARSVSEDYHREGQVRSKRPSAPREKKREPRVFVDPNEQVDGGYLVPQGVYTGPQDFDILVVKSLMTSRKLAPFFKGLQDYEEEWTDHQLMAAIRGFPIPSAASESPTTESTDTKDASASTSTPHAISTPSHLSPPTAPPQVAISPPRHTLSSNNPFRDPLEHMSHLRIDLDNTTFSQSAPTPSWMRSGEPDQEDGDELINPGILQSPPSREAPKPPPSRQRAKTLTNKEPPLMVKIYRDPIECPICFLYYPNSLNMTRCCAQPICSECFVQMKRAEPHPRHDEPEPDTLLGQLDLISEPTACPYCAMSDFGVVYSPRHGPGAKAAGANSADAAAAKGNGDESAIDDSGDSSDGIDTTNMDDVADKLMHMSGAKRRSSISVTNPNVVTVDRVRPDWSKTLAAARARAARKAATANALHATAFVEGGNGEVAGSSRSSRRTRQNHEQRQAARAQELEQIMLSEAMRLSMLESQEAEEKRSREQESK</sequence>
<name>SIP5_YARLI</name>
<protein>
    <recommendedName>
        <fullName>Protein SIP5</fullName>
    </recommendedName>
</protein>